<feature type="chain" id="PRO_0000403143" description="Chromophore lyase CpcS/CpeS 2">
    <location>
        <begin position="1"/>
        <end position="187"/>
    </location>
</feature>
<gene>
    <name evidence="1" type="primary">cpcS2</name>
    <name type="ordered locus">CYA_2807</name>
</gene>
<evidence type="ECO:0000255" key="1">
    <source>
        <dbReference type="HAMAP-Rule" id="MF_01459"/>
    </source>
</evidence>
<name>CPXS2_SYNJA</name>
<sequence length="187" mass="20859">MTVMEFFALSAGEWMCQRTSHHLAFRRSEGGRSRMQIATLSPADPAVIQVCELFKVDPRRAVGAARVQWNGEQEWDNEEYKGDVVLVPIPDPDNPMRGQLLRDQGYAEKVPVAGTYVMGSDGALTLYTEYEMTESEERIWFASPNLRLRASTVKRFGGFSMASFCSEVRKLSASPSPISAVAESRSL</sequence>
<organism>
    <name type="scientific">Synechococcus sp. (strain JA-3-3Ab)</name>
    <name type="common">Cyanobacteria bacterium Yellowstone A-Prime</name>
    <dbReference type="NCBI Taxonomy" id="321327"/>
    <lineage>
        <taxon>Bacteria</taxon>
        <taxon>Bacillati</taxon>
        <taxon>Cyanobacteriota</taxon>
        <taxon>Cyanophyceae</taxon>
        <taxon>Synechococcales</taxon>
        <taxon>Synechococcaceae</taxon>
        <taxon>Synechococcus</taxon>
    </lineage>
</organism>
<comment type="function">
    <text evidence="1">Covalently attaches a chromophore to Cys residue(s) of phycobiliproteins.</text>
</comment>
<comment type="similarity">
    <text evidence="1">Belongs to the CpcS/CpeS biliprotein lyase family.</text>
</comment>
<protein>
    <recommendedName>
        <fullName evidence="1">Chromophore lyase CpcS/CpeS 2</fullName>
        <ecNumber evidence="1">4.-.-.-</ecNumber>
    </recommendedName>
</protein>
<keyword id="KW-0456">Lyase</keyword>
<reference key="1">
    <citation type="journal article" date="2007" name="ISME J.">
        <title>Population level functional diversity in a microbial community revealed by comparative genomic and metagenomic analyses.</title>
        <authorList>
            <person name="Bhaya D."/>
            <person name="Grossman A.R."/>
            <person name="Steunou A.-S."/>
            <person name="Khuri N."/>
            <person name="Cohan F.M."/>
            <person name="Hamamura N."/>
            <person name="Melendrez M.C."/>
            <person name="Bateson M.M."/>
            <person name="Ward D.M."/>
            <person name="Heidelberg J.F."/>
        </authorList>
    </citation>
    <scope>NUCLEOTIDE SEQUENCE [LARGE SCALE GENOMIC DNA]</scope>
    <source>
        <strain>JA-3-3Ab</strain>
    </source>
</reference>
<dbReference type="EC" id="4.-.-.-" evidence="1"/>
<dbReference type="EMBL" id="CP000239">
    <property type="protein sequence ID" value="ABD00909.1"/>
    <property type="molecule type" value="Genomic_DNA"/>
</dbReference>
<dbReference type="SMR" id="Q2JR54"/>
<dbReference type="STRING" id="321327.CYA_2807"/>
<dbReference type="KEGG" id="cya:CYA_2807"/>
<dbReference type="eggNOG" id="ENOG502Z8E6">
    <property type="taxonomic scope" value="Bacteria"/>
</dbReference>
<dbReference type="HOGENOM" id="CLU_096258_0_0_3"/>
<dbReference type="OrthoDB" id="554080at2"/>
<dbReference type="Proteomes" id="UP000008818">
    <property type="component" value="Chromosome"/>
</dbReference>
<dbReference type="GO" id="GO:0016829">
    <property type="term" value="F:lyase activity"/>
    <property type="evidence" value="ECO:0007669"/>
    <property type="project" value="UniProtKB-KW"/>
</dbReference>
<dbReference type="CDD" id="cd19433">
    <property type="entry name" value="lipocalin_CpcS-CpeS"/>
    <property type="match status" value="1"/>
</dbReference>
<dbReference type="Gene3D" id="2.40.128.20">
    <property type="match status" value="1"/>
</dbReference>
<dbReference type="HAMAP" id="MF_01459">
    <property type="entry name" value="Chrphore_lyase_CpxS"/>
    <property type="match status" value="1"/>
</dbReference>
<dbReference type="InterPro" id="IPR012674">
    <property type="entry name" value="Calycin"/>
</dbReference>
<dbReference type="InterPro" id="IPR018536">
    <property type="entry name" value="CpcS/CpeS"/>
</dbReference>
<dbReference type="Pfam" id="PF09367">
    <property type="entry name" value="CpeS"/>
    <property type="match status" value="1"/>
</dbReference>
<proteinExistence type="inferred from homology"/>
<accession>Q2JR54</accession>